<gene>
    <name type="primary">Twf1</name>
    <name type="synonym">Ptk9</name>
</gene>
<feature type="initiator methionine" description="Removed" evidence="2">
    <location>
        <position position="1"/>
    </location>
</feature>
<feature type="chain" id="PRO_0000232406" description="Twinfilin-1">
    <location>
        <begin position="2"/>
        <end position="350"/>
    </location>
</feature>
<feature type="domain" description="ADF-H 1" evidence="4">
    <location>
        <begin position="2"/>
        <end position="139"/>
    </location>
</feature>
<feature type="domain" description="ADF-H 2" evidence="4">
    <location>
        <begin position="175"/>
        <end position="313"/>
    </location>
</feature>
<feature type="region of interest" description="Disordered" evidence="5">
    <location>
        <begin position="316"/>
        <end position="350"/>
    </location>
</feature>
<feature type="modified residue" description="N-acetylserine" evidence="2">
    <location>
        <position position="2"/>
    </location>
</feature>
<feature type="modified residue" description="Phosphoserine" evidence="7">
    <location>
        <position position="143"/>
    </location>
</feature>
<feature type="modified residue" description="Phosphoserine" evidence="7">
    <location>
        <position position="277"/>
    </location>
</feature>
<feature type="modified residue" description="Phosphotyrosine" evidence="2">
    <location>
        <position position="309"/>
    </location>
</feature>
<feature type="modified residue" description="Phosphothreonine" evidence="2">
    <location>
        <position position="349"/>
    </location>
</feature>
<reference key="1">
    <citation type="journal article" date="2004" name="Genome Res.">
        <title>The status, quality, and expansion of the NIH full-length cDNA project: the Mammalian Gene Collection (MGC).</title>
        <authorList>
            <consortium name="The MGC Project Team"/>
        </authorList>
    </citation>
    <scope>NUCLEOTIDE SEQUENCE [LARGE SCALE MRNA]</scope>
    <source>
        <tissue>Kidney</tissue>
    </source>
</reference>
<reference key="2">
    <citation type="journal article" date="2012" name="Nat. Commun.">
        <title>Quantitative maps of protein phosphorylation sites across 14 different rat organs and tissues.</title>
        <authorList>
            <person name="Lundby A."/>
            <person name="Secher A."/>
            <person name="Lage K."/>
            <person name="Nordsborg N.B."/>
            <person name="Dmytriyev A."/>
            <person name="Lundby C."/>
            <person name="Olsen J.V."/>
        </authorList>
    </citation>
    <scope>PHOSPHORYLATION [LARGE SCALE ANALYSIS] AT SER-143 AND SER-277</scope>
    <scope>IDENTIFICATION BY MASS SPECTROMETRY [LARGE SCALE ANALYSIS]</scope>
</reference>
<proteinExistence type="evidence at protein level"/>
<evidence type="ECO:0000250" key="1"/>
<evidence type="ECO:0000250" key="2">
    <source>
        <dbReference type="UniProtKB" id="Q12792"/>
    </source>
</evidence>
<evidence type="ECO:0000250" key="3">
    <source>
        <dbReference type="UniProtKB" id="Q91YR1"/>
    </source>
</evidence>
<evidence type="ECO:0000255" key="4">
    <source>
        <dbReference type="PROSITE-ProRule" id="PRU00599"/>
    </source>
</evidence>
<evidence type="ECO:0000256" key="5">
    <source>
        <dbReference type="SAM" id="MobiDB-lite"/>
    </source>
</evidence>
<evidence type="ECO:0000305" key="6"/>
<evidence type="ECO:0007744" key="7">
    <source>
    </source>
</evidence>
<comment type="function">
    <text evidence="1">Actin-binding protein involved in motile and morphological processes. Inhibits actin polymerization, likely by sequestering G-actin. By capping the barbed ends of filaments, it also regulates motility. Seems to play an important role in clathrin-mediated endocytosis and distribution of endocytic organelles (By similarity).</text>
</comment>
<comment type="subunit">
    <text evidence="2 3">Interacts with G-actin; ADP-actin form and capping protein (CP). May also be able to interact with TWF2 and phosphoinositides, PI(4,5)P2. When bound to PI(4,5)P2, it is down-regulated. Interacts with ACTG1.</text>
</comment>
<comment type="subcellular location">
    <subcellularLocation>
        <location>Cytoplasm</location>
    </subcellularLocation>
    <subcellularLocation>
        <location evidence="1">Cytoplasm</location>
        <location evidence="1">Cytoskeleton</location>
    </subcellularLocation>
    <text evidence="1">Diffuse cytoplasmic localization with perinuclear and G-actin-rich cortical actin structures sublocalization. Also found at membrane ruffles and cell-cell contacts (By similarity).</text>
</comment>
<comment type="PTM">
    <text evidence="1">Phosphorylated on serine and threonine residues.</text>
</comment>
<comment type="similarity">
    <text evidence="6">Belongs to the actin-binding proteins ADF family. Twinfilin subfamily.</text>
</comment>
<comment type="online information" name="Protein Spotlight">
    <link uri="https://www.proteinspotlight.org/back_issues/073"/>
    <text>Molecular embrace - Issue 73 of August 2006</text>
</comment>
<accession>Q5RJR2</accession>
<dbReference type="EMBL" id="BC086536">
    <property type="protein sequence ID" value="AAH86536.1"/>
    <property type="molecule type" value="mRNA"/>
</dbReference>
<dbReference type="RefSeq" id="NP_001008521.1">
    <property type="nucleotide sequence ID" value="NM_001008521.2"/>
</dbReference>
<dbReference type="SMR" id="Q5RJR2"/>
<dbReference type="BioGRID" id="260975">
    <property type="interactions" value="1"/>
</dbReference>
<dbReference type="FunCoup" id="Q5RJR2">
    <property type="interactions" value="2977"/>
</dbReference>
<dbReference type="IntAct" id="Q5RJR2">
    <property type="interactions" value="4"/>
</dbReference>
<dbReference type="STRING" id="10116.ENSRNOP00000030138"/>
<dbReference type="iPTMnet" id="Q5RJR2"/>
<dbReference type="PhosphoSitePlus" id="Q5RJR2"/>
<dbReference type="jPOST" id="Q5RJR2"/>
<dbReference type="PaxDb" id="10116-ENSRNOP00000030138"/>
<dbReference type="GeneID" id="315265"/>
<dbReference type="KEGG" id="rno:315265"/>
<dbReference type="AGR" id="RGD:1311872"/>
<dbReference type="CTD" id="5756"/>
<dbReference type="RGD" id="1311872">
    <property type="gene designation" value="Twf1"/>
</dbReference>
<dbReference type="VEuPathDB" id="HostDB:ENSRNOG00000022507"/>
<dbReference type="eggNOG" id="KOG1747">
    <property type="taxonomic scope" value="Eukaryota"/>
</dbReference>
<dbReference type="HOGENOM" id="CLU_031995_1_0_1"/>
<dbReference type="InParanoid" id="Q5RJR2"/>
<dbReference type="OrthoDB" id="10006997at2759"/>
<dbReference type="PhylomeDB" id="Q5RJR2"/>
<dbReference type="TreeFam" id="TF352598"/>
<dbReference type="Reactome" id="R-RNO-9013418">
    <property type="pathway name" value="RHOBTB2 GTPase cycle"/>
</dbReference>
<dbReference type="PRO" id="PR:Q5RJR2"/>
<dbReference type="Proteomes" id="UP000002494">
    <property type="component" value="Chromosome 7"/>
</dbReference>
<dbReference type="Bgee" id="ENSRNOG00000022507">
    <property type="expression patterns" value="Expressed in jejunum and 19 other cell types or tissues"/>
</dbReference>
<dbReference type="GO" id="GO:0015629">
    <property type="term" value="C:actin cytoskeleton"/>
    <property type="evidence" value="ECO:0000266"/>
    <property type="project" value="RGD"/>
</dbReference>
<dbReference type="GO" id="GO:0005884">
    <property type="term" value="C:actin filament"/>
    <property type="evidence" value="ECO:0000318"/>
    <property type="project" value="GO_Central"/>
</dbReference>
<dbReference type="GO" id="GO:0005911">
    <property type="term" value="C:cell-cell junction"/>
    <property type="evidence" value="ECO:0000266"/>
    <property type="project" value="RGD"/>
</dbReference>
<dbReference type="GO" id="GO:0005737">
    <property type="term" value="C:cytoplasm"/>
    <property type="evidence" value="ECO:0000318"/>
    <property type="project" value="GO_Central"/>
</dbReference>
<dbReference type="GO" id="GO:0030175">
    <property type="term" value="C:filopodium"/>
    <property type="evidence" value="ECO:0000266"/>
    <property type="project" value="RGD"/>
</dbReference>
<dbReference type="GO" id="GO:0030016">
    <property type="term" value="C:myofibril"/>
    <property type="evidence" value="ECO:0000266"/>
    <property type="project" value="RGD"/>
</dbReference>
<dbReference type="GO" id="GO:0048471">
    <property type="term" value="C:perinuclear region of cytoplasm"/>
    <property type="evidence" value="ECO:0000266"/>
    <property type="project" value="RGD"/>
</dbReference>
<dbReference type="GO" id="GO:0032587">
    <property type="term" value="C:ruffle membrane"/>
    <property type="evidence" value="ECO:0000266"/>
    <property type="project" value="RGD"/>
</dbReference>
<dbReference type="GO" id="GO:0003779">
    <property type="term" value="F:actin binding"/>
    <property type="evidence" value="ECO:0000250"/>
    <property type="project" value="UniProtKB"/>
</dbReference>
<dbReference type="GO" id="GO:0051015">
    <property type="term" value="F:actin filament binding"/>
    <property type="evidence" value="ECO:0000318"/>
    <property type="project" value="GO_Central"/>
</dbReference>
<dbReference type="GO" id="GO:0003785">
    <property type="term" value="F:actin monomer binding"/>
    <property type="evidence" value="ECO:0000266"/>
    <property type="project" value="RGD"/>
</dbReference>
<dbReference type="GO" id="GO:0005524">
    <property type="term" value="F:ATP binding"/>
    <property type="evidence" value="ECO:0000266"/>
    <property type="project" value="RGD"/>
</dbReference>
<dbReference type="GO" id="GO:0005546">
    <property type="term" value="F:phosphatidylinositol-4,5-bisphosphate binding"/>
    <property type="evidence" value="ECO:0000266"/>
    <property type="project" value="RGD"/>
</dbReference>
<dbReference type="GO" id="GO:0004713">
    <property type="term" value="F:protein tyrosine kinase activity"/>
    <property type="evidence" value="ECO:0000266"/>
    <property type="project" value="RGD"/>
</dbReference>
<dbReference type="GO" id="GO:0044877">
    <property type="term" value="F:protein-containing complex binding"/>
    <property type="evidence" value="ECO:0000266"/>
    <property type="project" value="RGD"/>
</dbReference>
<dbReference type="GO" id="GO:0030042">
    <property type="term" value="P:actin filament depolymerization"/>
    <property type="evidence" value="ECO:0000318"/>
    <property type="project" value="GO_Central"/>
</dbReference>
<dbReference type="GO" id="GO:0051016">
    <property type="term" value="P:barbed-end actin filament capping"/>
    <property type="evidence" value="ECO:0000266"/>
    <property type="project" value="RGD"/>
</dbReference>
<dbReference type="GO" id="GO:1990708">
    <property type="term" value="P:conditioned place preference"/>
    <property type="evidence" value="ECO:0000270"/>
    <property type="project" value="RGD"/>
</dbReference>
<dbReference type="GO" id="GO:0030837">
    <property type="term" value="P:negative regulation of actin filament polymerization"/>
    <property type="evidence" value="ECO:0000315"/>
    <property type="project" value="RGD"/>
</dbReference>
<dbReference type="GO" id="GO:0061002">
    <property type="term" value="P:negative regulation of dendritic spine morphogenesis"/>
    <property type="evidence" value="ECO:0000315"/>
    <property type="project" value="RGD"/>
</dbReference>
<dbReference type="GO" id="GO:0010613">
    <property type="term" value="P:positive regulation of cardiac muscle hypertrophy"/>
    <property type="evidence" value="ECO:0000266"/>
    <property type="project" value="RGD"/>
</dbReference>
<dbReference type="GO" id="GO:0010976">
    <property type="term" value="P:positive regulation of neuron projection development"/>
    <property type="evidence" value="ECO:0000318"/>
    <property type="project" value="GO_Central"/>
</dbReference>
<dbReference type="GO" id="GO:0010591">
    <property type="term" value="P:regulation of lamellipodium assembly"/>
    <property type="evidence" value="ECO:0000318"/>
    <property type="project" value="GO_Central"/>
</dbReference>
<dbReference type="CDD" id="cd11284">
    <property type="entry name" value="ADF_Twf-C_like"/>
    <property type="match status" value="1"/>
</dbReference>
<dbReference type="CDD" id="cd11285">
    <property type="entry name" value="ADF_Twf-N_like"/>
    <property type="match status" value="1"/>
</dbReference>
<dbReference type="FunFam" id="3.40.20.10:FF:000007">
    <property type="entry name" value="Twinfilin-1 isoform 1"/>
    <property type="match status" value="1"/>
</dbReference>
<dbReference type="FunFam" id="3.40.20.10:FF:000012">
    <property type="entry name" value="Twinfilin-1 isoform 1"/>
    <property type="match status" value="1"/>
</dbReference>
<dbReference type="Gene3D" id="3.40.20.10">
    <property type="entry name" value="Severin"/>
    <property type="match status" value="2"/>
</dbReference>
<dbReference type="InterPro" id="IPR002108">
    <property type="entry name" value="ADF-H"/>
</dbReference>
<dbReference type="InterPro" id="IPR029006">
    <property type="entry name" value="ADF-H/Gelsolin-like_dom_sf"/>
</dbReference>
<dbReference type="InterPro" id="IPR028458">
    <property type="entry name" value="Twinfilin"/>
</dbReference>
<dbReference type="PANTHER" id="PTHR13759">
    <property type="entry name" value="TWINFILIN"/>
    <property type="match status" value="1"/>
</dbReference>
<dbReference type="PANTHER" id="PTHR13759:SF8">
    <property type="entry name" value="TWINFILIN-1"/>
    <property type="match status" value="1"/>
</dbReference>
<dbReference type="Pfam" id="PF00241">
    <property type="entry name" value="Cofilin_ADF"/>
    <property type="match status" value="2"/>
</dbReference>
<dbReference type="SMART" id="SM00102">
    <property type="entry name" value="ADF"/>
    <property type="match status" value="2"/>
</dbReference>
<dbReference type="SUPFAM" id="SSF55753">
    <property type="entry name" value="Actin depolymerizing proteins"/>
    <property type="match status" value="2"/>
</dbReference>
<dbReference type="PROSITE" id="PS51263">
    <property type="entry name" value="ADF_H"/>
    <property type="match status" value="2"/>
</dbReference>
<sequence>MSHQTGIQASEDVKEIFARARNGKYRLLKISIENEQLVVGSCSPPSDSWEQDYDPFVLPLLEDKQPCYVLFRLDSQNAQGYEWIFIAWSPDHSHVRQKMLYAATRATLKKEFGGGHIKDEVFGTVKEDVSLHGYRKYLLSQSSPAPLTAAEEELRQIKISEVQTDVSVDTKHQTLQGVAFPISRDAFQALEKLSKRQLNYVQLEIDIKNETIILANTENTELKDLPKRIPKDSARYHFFLYKHSHEGDYLESIVFIYSMPGYTCSIRERMLYSSCKSPLLDIVERQLQMDVIRKIEIDNGDELTADFLYDEVHPKQHAHKQSFAKPKGPAGKRGIRRLIRGPAEAEATTD</sequence>
<protein>
    <recommendedName>
        <fullName>Twinfilin-1</fullName>
    </recommendedName>
</protein>
<keyword id="KW-0007">Acetylation</keyword>
<keyword id="KW-0009">Actin-binding</keyword>
<keyword id="KW-0963">Cytoplasm</keyword>
<keyword id="KW-0206">Cytoskeleton</keyword>
<keyword id="KW-0597">Phosphoprotein</keyword>
<keyword id="KW-1185">Reference proteome</keyword>
<keyword id="KW-0677">Repeat</keyword>
<organism>
    <name type="scientific">Rattus norvegicus</name>
    <name type="common">Rat</name>
    <dbReference type="NCBI Taxonomy" id="10116"/>
    <lineage>
        <taxon>Eukaryota</taxon>
        <taxon>Metazoa</taxon>
        <taxon>Chordata</taxon>
        <taxon>Craniata</taxon>
        <taxon>Vertebrata</taxon>
        <taxon>Euteleostomi</taxon>
        <taxon>Mammalia</taxon>
        <taxon>Eutheria</taxon>
        <taxon>Euarchontoglires</taxon>
        <taxon>Glires</taxon>
        <taxon>Rodentia</taxon>
        <taxon>Myomorpha</taxon>
        <taxon>Muroidea</taxon>
        <taxon>Muridae</taxon>
        <taxon>Murinae</taxon>
        <taxon>Rattus</taxon>
    </lineage>
</organism>
<name>TWF1_RAT</name>